<organism>
    <name type="scientific">Citrifermentans bemidjiense (strain ATCC BAA-1014 / DSM 16622 / JCM 12645 / Bem)</name>
    <name type="common">Geobacter bemidjiensis</name>
    <dbReference type="NCBI Taxonomy" id="404380"/>
    <lineage>
        <taxon>Bacteria</taxon>
        <taxon>Pseudomonadati</taxon>
        <taxon>Thermodesulfobacteriota</taxon>
        <taxon>Desulfuromonadia</taxon>
        <taxon>Geobacterales</taxon>
        <taxon>Geobacteraceae</taxon>
        <taxon>Citrifermentans</taxon>
    </lineage>
</organism>
<keyword id="KW-0067">ATP-binding</keyword>
<keyword id="KW-0963">Cytoplasm</keyword>
<keyword id="KW-0418">Kinase</keyword>
<keyword id="KW-0547">Nucleotide-binding</keyword>
<keyword id="KW-1185">Reference proteome</keyword>
<keyword id="KW-0808">Transferase</keyword>
<protein>
    <recommendedName>
        <fullName evidence="1">Cytidylate kinase</fullName>
        <shortName evidence="1">CK</shortName>
        <ecNumber evidence="1">2.7.4.25</ecNumber>
    </recommendedName>
    <alternativeName>
        <fullName evidence="1">Cytidine monophosphate kinase</fullName>
        <shortName evidence="1">CMP kinase</shortName>
    </alternativeName>
</protein>
<dbReference type="EC" id="2.7.4.25" evidence="1"/>
<dbReference type="EMBL" id="CP001124">
    <property type="protein sequence ID" value="ACH40254.1"/>
    <property type="molecule type" value="Genomic_DNA"/>
</dbReference>
<dbReference type="RefSeq" id="WP_012531685.1">
    <property type="nucleotide sequence ID" value="NC_011146.1"/>
</dbReference>
<dbReference type="SMR" id="B5E9T0"/>
<dbReference type="STRING" id="404380.Gbem_3257"/>
<dbReference type="KEGG" id="gbm:Gbem_3257"/>
<dbReference type="eggNOG" id="COG0283">
    <property type="taxonomic scope" value="Bacteria"/>
</dbReference>
<dbReference type="HOGENOM" id="CLU_079959_0_2_7"/>
<dbReference type="OrthoDB" id="9807434at2"/>
<dbReference type="Proteomes" id="UP000008825">
    <property type="component" value="Chromosome"/>
</dbReference>
<dbReference type="GO" id="GO:0005829">
    <property type="term" value="C:cytosol"/>
    <property type="evidence" value="ECO:0007669"/>
    <property type="project" value="TreeGrafter"/>
</dbReference>
<dbReference type="GO" id="GO:0005524">
    <property type="term" value="F:ATP binding"/>
    <property type="evidence" value="ECO:0007669"/>
    <property type="project" value="UniProtKB-UniRule"/>
</dbReference>
<dbReference type="GO" id="GO:0036430">
    <property type="term" value="F:CMP kinase activity"/>
    <property type="evidence" value="ECO:0007669"/>
    <property type="project" value="RHEA"/>
</dbReference>
<dbReference type="GO" id="GO:0036431">
    <property type="term" value="F:dCMP kinase activity"/>
    <property type="evidence" value="ECO:0007669"/>
    <property type="project" value="RHEA"/>
</dbReference>
<dbReference type="GO" id="GO:0015949">
    <property type="term" value="P:nucleobase-containing small molecule interconversion"/>
    <property type="evidence" value="ECO:0007669"/>
    <property type="project" value="TreeGrafter"/>
</dbReference>
<dbReference type="GO" id="GO:0006220">
    <property type="term" value="P:pyrimidine nucleotide metabolic process"/>
    <property type="evidence" value="ECO:0007669"/>
    <property type="project" value="UniProtKB-UniRule"/>
</dbReference>
<dbReference type="CDD" id="cd02020">
    <property type="entry name" value="CMPK"/>
    <property type="match status" value="1"/>
</dbReference>
<dbReference type="Gene3D" id="3.40.50.300">
    <property type="entry name" value="P-loop containing nucleotide triphosphate hydrolases"/>
    <property type="match status" value="1"/>
</dbReference>
<dbReference type="HAMAP" id="MF_00238">
    <property type="entry name" value="Cytidyl_kinase_type1"/>
    <property type="match status" value="1"/>
</dbReference>
<dbReference type="InterPro" id="IPR003136">
    <property type="entry name" value="Cytidylate_kin"/>
</dbReference>
<dbReference type="InterPro" id="IPR011994">
    <property type="entry name" value="Cytidylate_kinase_dom"/>
</dbReference>
<dbReference type="InterPro" id="IPR027417">
    <property type="entry name" value="P-loop_NTPase"/>
</dbReference>
<dbReference type="NCBIfam" id="TIGR00017">
    <property type="entry name" value="cmk"/>
    <property type="match status" value="1"/>
</dbReference>
<dbReference type="PANTHER" id="PTHR21299:SF2">
    <property type="entry name" value="CYTIDYLATE KINASE"/>
    <property type="match status" value="1"/>
</dbReference>
<dbReference type="PANTHER" id="PTHR21299">
    <property type="entry name" value="CYTIDYLATE KINASE/PANTOATE-BETA-ALANINE LIGASE"/>
    <property type="match status" value="1"/>
</dbReference>
<dbReference type="Pfam" id="PF02224">
    <property type="entry name" value="Cytidylate_kin"/>
    <property type="match status" value="1"/>
</dbReference>
<dbReference type="SUPFAM" id="SSF52540">
    <property type="entry name" value="P-loop containing nucleoside triphosphate hydrolases"/>
    <property type="match status" value="1"/>
</dbReference>
<reference key="1">
    <citation type="submission" date="2008-07" db="EMBL/GenBank/DDBJ databases">
        <title>Complete sequence of Geobacter bemidjiensis BEM.</title>
        <authorList>
            <consortium name="US DOE Joint Genome Institute"/>
            <person name="Lucas S."/>
            <person name="Copeland A."/>
            <person name="Lapidus A."/>
            <person name="Glavina del Rio T."/>
            <person name="Dalin E."/>
            <person name="Tice H."/>
            <person name="Bruce D."/>
            <person name="Goodwin L."/>
            <person name="Pitluck S."/>
            <person name="Kiss H."/>
            <person name="Brettin T."/>
            <person name="Detter J.C."/>
            <person name="Han C."/>
            <person name="Kuske C.R."/>
            <person name="Schmutz J."/>
            <person name="Larimer F."/>
            <person name="Land M."/>
            <person name="Hauser L."/>
            <person name="Kyrpides N."/>
            <person name="Lykidis A."/>
            <person name="Lovley D."/>
            <person name="Richardson P."/>
        </authorList>
    </citation>
    <scope>NUCLEOTIDE SEQUENCE [LARGE SCALE GENOMIC DNA]</scope>
    <source>
        <strain>ATCC BAA-1014 / DSM 16622 / JCM 12645 / Bem</strain>
    </source>
</reference>
<sequence length="233" mass="25135">MSAVRENGVIVAIDGPSGAGKSSLTKLLAKRLGYIHIDTGAMFRAVALSAQRAGIKSDDDAGLAELCRGLEIAFARDGETCRVLANGEDVSTKIRTEEIGLLTSTISARKPVRQALLEMQRKMGAKGGVILEGRDIGTVVFPDAEVKFFLSASAEERGRRRYLELAARGESATLEETIAKVIQRDRQDEGREHAPLKQAQDAVPIDSTSLTIEQVLELMESTVKERLAQGDKG</sequence>
<feature type="chain" id="PRO_1000100665" description="Cytidylate kinase">
    <location>
        <begin position="1"/>
        <end position="233"/>
    </location>
</feature>
<feature type="binding site" evidence="1">
    <location>
        <begin position="15"/>
        <end position="23"/>
    </location>
    <ligand>
        <name>ATP</name>
        <dbReference type="ChEBI" id="CHEBI:30616"/>
    </ligand>
</feature>
<comment type="catalytic activity">
    <reaction evidence="1">
        <text>CMP + ATP = CDP + ADP</text>
        <dbReference type="Rhea" id="RHEA:11600"/>
        <dbReference type="ChEBI" id="CHEBI:30616"/>
        <dbReference type="ChEBI" id="CHEBI:58069"/>
        <dbReference type="ChEBI" id="CHEBI:60377"/>
        <dbReference type="ChEBI" id="CHEBI:456216"/>
        <dbReference type="EC" id="2.7.4.25"/>
    </reaction>
</comment>
<comment type="catalytic activity">
    <reaction evidence="1">
        <text>dCMP + ATP = dCDP + ADP</text>
        <dbReference type="Rhea" id="RHEA:25094"/>
        <dbReference type="ChEBI" id="CHEBI:30616"/>
        <dbReference type="ChEBI" id="CHEBI:57566"/>
        <dbReference type="ChEBI" id="CHEBI:58593"/>
        <dbReference type="ChEBI" id="CHEBI:456216"/>
        <dbReference type="EC" id="2.7.4.25"/>
    </reaction>
</comment>
<comment type="subcellular location">
    <subcellularLocation>
        <location evidence="1">Cytoplasm</location>
    </subcellularLocation>
</comment>
<comment type="similarity">
    <text evidence="1">Belongs to the cytidylate kinase family. Type 1 subfamily.</text>
</comment>
<proteinExistence type="inferred from homology"/>
<accession>B5E9T0</accession>
<evidence type="ECO:0000255" key="1">
    <source>
        <dbReference type="HAMAP-Rule" id="MF_00238"/>
    </source>
</evidence>
<name>KCY_CITBB</name>
<gene>
    <name evidence="1" type="primary">cmk</name>
    <name type="ordered locus">Gbem_3257</name>
</gene>